<evidence type="ECO:0000255" key="1">
    <source>
        <dbReference type="HAMAP-Rule" id="MF_00920"/>
    </source>
</evidence>
<feature type="chain" id="PRO_0000416705" description="Signal recognition particle receptor FtsY">
    <location>
        <begin position="1"/>
        <end position="417"/>
    </location>
</feature>
<feature type="binding site" evidence="1">
    <location>
        <begin position="228"/>
        <end position="235"/>
    </location>
    <ligand>
        <name>GTP</name>
        <dbReference type="ChEBI" id="CHEBI:37565"/>
    </ligand>
</feature>
<feature type="binding site" evidence="1">
    <location>
        <begin position="310"/>
        <end position="314"/>
    </location>
    <ligand>
        <name>GTP</name>
        <dbReference type="ChEBI" id="CHEBI:37565"/>
    </ligand>
</feature>
<feature type="binding site" evidence="1">
    <location>
        <begin position="368"/>
        <end position="371"/>
    </location>
    <ligand>
        <name>GTP</name>
        <dbReference type="ChEBI" id="CHEBI:37565"/>
    </ligand>
</feature>
<keyword id="KW-1003">Cell membrane</keyword>
<keyword id="KW-0963">Cytoplasm</keyword>
<keyword id="KW-0342">GTP-binding</keyword>
<keyword id="KW-0378">Hydrolase</keyword>
<keyword id="KW-0472">Membrane</keyword>
<keyword id="KW-0547">Nucleotide-binding</keyword>
<keyword id="KW-0675">Receptor</keyword>
<keyword id="KW-1185">Reference proteome</keyword>
<dbReference type="EC" id="3.6.5.4" evidence="1"/>
<dbReference type="EMBL" id="AE010299">
    <property type="protein sequence ID" value="AAM07457.1"/>
    <property type="molecule type" value="Genomic_DNA"/>
</dbReference>
<dbReference type="RefSeq" id="WP_011024000.1">
    <property type="nucleotide sequence ID" value="NC_003552.1"/>
</dbReference>
<dbReference type="SMR" id="Q8TIN7"/>
<dbReference type="FunCoup" id="Q8TIN7">
    <property type="interactions" value="109"/>
</dbReference>
<dbReference type="STRING" id="188937.MA_4109"/>
<dbReference type="EnsemblBacteria" id="AAM07457">
    <property type="protein sequence ID" value="AAM07457"/>
    <property type="gene ID" value="MA_4109"/>
</dbReference>
<dbReference type="GeneID" id="1476003"/>
<dbReference type="KEGG" id="mac:MA_4109"/>
<dbReference type="HOGENOM" id="CLU_009301_3_1_2"/>
<dbReference type="InParanoid" id="Q8TIN7"/>
<dbReference type="OrthoDB" id="372188at2157"/>
<dbReference type="PhylomeDB" id="Q8TIN7"/>
<dbReference type="Proteomes" id="UP000002487">
    <property type="component" value="Chromosome"/>
</dbReference>
<dbReference type="GO" id="GO:0005737">
    <property type="term" value="C:cytoplasm"/>
    <property type="evidence" value="ECO:0007669"/>
    <property type="project" value="UniProtKB-SubCell"/>
</dbReference>
<dbReference type="GO" id="GO:0016020">
    <property type="term" value="C:membrane"/>
    <property type="evidence" value="ECO:0000318"/>
    <property type="project" value="GO_Central"/>
</dbReference>
<dbReference type="GO" id="GO:0005886">
    <property type="term" value="C:plasma membrane"/>
    <property type="evidence" value="ECO:0007669"/>
    <property type="project" value="UniProtKB-SubCell"/>
</dbReference>
<dbReference type="GO" id="GO:0016887">
    <property type="term" value="F:ATP hydrolysis activity"/>
    <property type="evidence" value="ECO:0007669"/>
    <property type="project" value="InterPro"/>
</dbReference>
<dbReference type="GO" id="GO:0005525">
    <property type="term" value="F:GTP binding"/>
    <property type="evidence" value="ECO:0007669"/>
    <property type="project" value="UniProtKB-UniRule"/>
</dbReference>
<dbReference type="GO" id="GO:0003924">
    <property type="term" value="F:GTPase activity"/>
    <property type="evidence" value="ECO:0000318"/>
    <property type="project" value="GO_Central"/>
</dbReference>
<dbReference type="GO" id="GO:0005047">
    <property type="term" value="F:signal recognition particle binding"/>
    <property type="evidence" value="ECO:0000318"/>
    <property type="project" value="GO_Central"/>
</dbReference>
<dbReference type="GO" id="GO:0006605">
    <property type="term" value="P:protein targeting"/>
    <property type="evidence" value="ECO:0000318"/>
    <property type="project" value="GO_Central"/>
</dbReference>
<dbReference type="GO" id="GO:0006614">
    <property type="term" value="P:SRP-dependent cotranslational protein targeting to membrane"/>
    <property type="evidence" value="ECO:0007669"/>
    <property type="project" value="InterPro"/>
</dbReference>
<dbReference type="CDD" id="cd17874">
    <property type="entry name" value="FtsY"/>
    <property type="match status" value="1"/>
</dbReference>
<dbReference type="FunFam" id="3.40.50.300:FF:000053">
    <property type="entry name" value="Signal recognition particle receptor FtsY"/>
    <property type="match status" value="1"/>
</dbReference>
<dbReference type="Gene3D" id="3.40.50.300">
    <property type="entry name" value="P-loop containing nucleotide triphosphate hydrolases"/>
    <property type="match status" value="1"/>
</dbReference>
<dbReference type="Gene3D" id="1.20.120.140">
    <property type="entry name" value="Signal recognition particle SRP54, nucleotide-binding domain"/>
    <property type="match status" value="1"/>
</dbReference>
<dbReference type="HAMAP" id="MF_00920">
    <property type="entry name" value="FtsY"/>
    <property type="match status" value="1"/>
</dbReference>
<dbReference type="InterPro" id="IPR003593">
    <property type="entry name" value="AAA+_ATPase"/>
</dbReference>
<dbReference type="InterPro" id="IPR027417">
    <property type="entry name" value="P-loop_NTPase"/>
</dbReference>
<dbReference type="InterPro" id="IPR013822">
    <property type="entry name" value="Signal_recog_particl_SRP54_hlx"/>
</dbReference>
<dbReference type="InterPro" id="IPR004390">
    <property type="entry name" value="SR_rcpt_FtsY"/>
</dbReference>
<dbReference type="InterPro" id="IPR036225">
    <property type="entry name" value="SRP/SRP_N"/>
</dbReference>
<dbReference type="InterPro" id="IPR000897">
    <property type="entry name" value="SRP54_GTPase_dom"/>
</dbReference>
<dbReference type="InterPro" id="IPR042101">
    <property type="entry name" value="SRP54_N_sf"/>
</dbReference>
<dbReference type="NCBIfam" id="TIGR00064">
    <property type="entry name" value="ftsY"/>
    <property type="match status" value="1"/>
</dbReference>
<dbReference type="PANTHER" id="PTHR43134">
    <property type="entry name" value="SIGNAL RECOGNITION PARTICLE RECEPTOR SUBUNIT ALPHA"/>
    <property type="match status" value="1"/>
</dbReference>
<dbReference type="PANTHER" id="PTHR43134:SF1">
    <property type="entry name" value="SIGNAL RECOGNITION PARTICLE RECEPTOR SUBUNIT ALPHA"/>
    <property type="match status" value="1"/>
</dbReference>
<dbReference type="Pfam" id="PF00448">
    <property type="entry name" value="SRP54"/>
    <property type="match status" value="1"/>
</dbReference>
<dbReference type="Pfam" id="PF02881">
    <property type="entry name" value="SRP54_N"/>
    <property type="match status" value="1"/>
</dbReference>
<dbReference type="SMART" id="SM00382">
    <property type="entry name" value="AAA"/>
    <property type="match status" value="1"/>
</dbReference>
<dbReference type="SMART" id="SM00962">
    <property type="entry name" value="SRP54"/>
    <property type="match status" value="1"/>
</dbReference>
<dbReference type="SMART" id="SM00963">
    <property type="entry name" value="SRP54_N"/>
    <property type="match status" value="1"/>
</dbReference>
<dbReference type="SUPFAM" id="SSF47364">
    <property type="entry name" value="Domain of the SRP/SRP receptor G-proteins"/>
    <property type="match status" value="1"/>
</dbReference>
<dbReference type="SUPFAM" id="SSF52540">
    <property type="entry name" value="P-loop containing nucleoside triphosphate hydrolases"/>
    <property type="match status" value="1"/>
</dbReference>
<reference key="1">
    <citation type="journal article" date="2002" name="Genome Res.">
        <title>The genome of Methanosarcina acetivorans reveals extensive metabolic and physiological diversity.</title>
        <authorList>
            <person name="Galagan J.E."/>
            <person name="Nusbaum C."/>
            <person name="Roy A."/>
            <person name="Endrizzi M.G."/>
            <person name="Macdonald P."/>
            <person name="FitzHugh W."/>
            <person name="Calvo S."/>
            <person name="Engels R."/>
            <person name="Smirnov S."/>
            <person name="Atnoor D."/>
            <person name="Brown A."/>
            <person name="Allen N."/>
            <person name="Naylor J."/>
            <person name="Stange-Thomann N."/>
            <person name="DeArellano K."/>
            <person name="Johnson R."/>
            <person name="Linton L."/>
            <person name="McEwan P."/>
            <person name="McKernan K."/>
            <person name="Talamas J."/>
            <person name="Tirrell A."/>
            <person name="Ye W."/>
            <person name="Zimmer A."/>
            <person name="Barber R.D."/>
            <person name="Cann I."/>
            <person name="Graham D.E."/>
            <person name="Grahame D.A."/>
            <person name="Guss A.M."/>
            <person name="Hedderich R."/>
            <person name="Ingram-Smith C."/>
            <person name="Kuettner H.C."/>
            <person name="Krzycki J.A."/>
            <person name="Leigh J.A."/>
            <person name="Li W."/>
            <person name="Liu J."/>
            <person name="Mukhopadhyay B."/>
            <person name="Reeve J.N."/>
            <person name="Smith K."/>
            <person name="Springer T.A."/>
            <person name="Umayam L.A."/>
            <person name="White O."/>
            <person name="White R.H."/>
            <person name="de Macario E.C."/>
            <person name="Ferry J.G."/>
            <person name="Jarrell K.F."/>
            <person name="Jing H."/>
            <person name="Macario A.J.L."/>
            <person name="Paulsen I.T."/>
            <person name="Pritchett M."/>
            <person name="Sowers K.R."/>
            <person name="Swanson R.V."/>
            <person name="Zinder S.H."/>
            <person name="Lander E."/>
            <person name="Metcalf W.W."/>
            <person name="Birren B."/>
        </authorList>
    </citation>
    <scope>NUCLEOTIDE SEQUENCE [LARGE SCALE GENOMIC DNA]</scope>
    <source>
        <strain>ATCC 35395 / DSM 2834 / JCM 12185 / C2A</strain>
    </source>
</reference>
<protein>
    <recommendedName>
        <fullName evidence="1">Signal recognition particle receptor FtsY</fullName>
        <shortName evidence="1">SRP receptor</shortName>
        <ecNumber evidence="1">3.6.5.4</ecNumber>
    </recommendedName>
</protein>
<accession>Q8TIN7</accession>
<sequence length="417" mass="45893">MFNKFKEKLGSFKKALSKTIDEKAVEVEPVVVEQMPQSEESLEEEIEPIVEEEALEAALEAESSEAETEAASPAIAHVPIEDLKKAEYRKKLKDLKKVGEKKVEEEKPPEEKKSFFKKVVPKVGFAQKAKALVFNREVYLDNKDLEEPLWELEMGLLESDLALSVSEAIVESVKNQLTGTTKRIGSNTGEIVEAALKKAILEVVSANTFDFDEYVKNREKPVHIVFVGINGTGKTTSISKITNRLLKSGYSVVLAAGDTFRAGAIDQLGIHANRLGVKMIKHQAGADPAAVIYDAVQYAKAHKIDFVLSDTAGRMHTNMNLMAQMEKICRVSTPDLIIFVDEAVAGNDAVERAAQFNEAVPIDGSILTKIDADAKGGAAISIAYITGKPILFFGIGQGYEDLKKFDPEWFVDQLFNQ</sequence>
<comment type="function">
    <text evidence="1">Involved in targeting and insertion of nascent membrane proteins into the cytoplasmic membrane. Acts as a receptor for the complex formed by the signal recognition particle (SRP) and the ribosome-nascent chain (RNC).</text>
</comment>
<comment type="catalytic activity">
    <reaction evidence="1">
        <text>GTP + H2O = GDP + phosphate + H(+)</text>
        <dbReference type="Rhea" id="RHEA:19669"/>
        <dbReference type="ChEBI" id="CHEBI:15377"/>
        <dbReference type="ChEBI" id="CHEBI:15378"/>
        <dbReference type="ChEBI" id="CHEBI:37565"/>
        <dbReference type="ChEBI" id="CHEBI:43474"/>
        <dbReference type="ChEBI" id="CHEBI:58189"/>
        <dbReference type="EC" id="3.6.5.4"/>
    </reaction>
</comment>
<comment type="subunit">
    <text evidence="1">Part of the signal recognition particle protein translocation system, which is composed of SRP and FtsY.</text>
</comment>
<comment type="subcellular location">
    <subcellularLocation>
        <location>Cell membrane</location>
        <topology>Peripheral membrane protein</topology>
        <orientation>Cytoplasmic side</orientation>
    </subcellularLocation>
    <subcellularLocation>
        <location evidence="1">Cytoplasm</location>
    </subcellularLocation>
</comment>
<comment type="similarity">
    <text evidence="1">Belongs to the GTP-binding SRP family. FtsY subfamily.</text>
</comment>
<proteinExistence type="inferred from homology"/>
<gene>
    <name evidence="1" type="primary">ftsY</name>
    <name type="ordered locus">MA_4109</name>
</gene>
<organism>
    <name type="scientific">Methanosarcina acetivorans (strain ATCC 35395 / DSM 2834 / JCM 12185 / C2A)</name>
    <dbReference type="NCBI Taxonomy" id="188937"/>
    <lineage>
        <taxon>Archaea</taxon>
        <taxon>Methanobacteriati</taxon>
        <taxon>Methanobacteriota</taxon>
        <taxon>Stenosarchaea group</taxon>
        <taxon>Methanomicrobia</taxon>
        <taxon>Methanosarcinales</taxon>
        <taxon>Methanosarcinaceae</taxon>
        <taxon>Methanosarcina</taxon>
    </lineage>
</organism>
<name>FTSY_METAC</name>